<evidence type="ECO:0000255" key="1">
    <source>
        <dbReference type="HAMAP-Rule" id="MF_00823"/>
    </source>
</evidence>
<evidence type="ECO:0000255" key="2">
    <source>
        <dbReference type="PROSITE-ProRule" id="PRU01137"/>
    </source>
</evidence>
<sequence>MPRRYLLDFEKPLVELEKQIEQIRELARDSEVDVSQQLLQLETLATRRREEIFRSLTPAQKIQVARHPQRPSTLDFIQMFCDDWIELHGDRNGGDDMALIGGLGSVNNQPVLLLGHQKGRDTKENVVRNFGMAKPGGYRKALRLMQHADRFSLPILSFIDTPGAYAGLSAEEQGQGEAIARNLREMFGFKVPIIATIIGEGGSGGALGIGVADRLLMFEHSVYTVASPEACASILWRDAAKAPEAATALKITGKDLLELGVIDEVLSEPAGGNNWAPIEAGNTLKASIERHLSELLKMSKEELLEQRYSKFRVLGKFIESSSVEEIKEEFTQKKE</sequence>
<keyword id="KW-0067">ATP-binding</keyword>
<keyword id="KW-0963">Cytoplasm</keyword>
<keyword id="KW-0275">Fatty acid biosynthesis</keyword>
<keyword id="KW-0276">Fatty acid metabolism</keyword>
<keyword id="KW-0444">Lipid biosynthesis</keyword>
<keyword id="KW-0443">Lipid metabolism</keyword>
<keyword id="KW-0547">Nucleotide-binding</keyword>
<keyword id="KW-0808">Transferase</keyword>
<proteinExistence type="inferred from homology"/>
<name>ACCA_PROM5</name>
<feature type="chain" id="PRO_1000062651" description="Acetyl-coenzyme A carboxylase carboxyl transferase subunit alpha">
    <location>
        <begin position="1"/>
        <end position="335"/>
    </location>
</feature>
<feature type="domain" description="CoA carboxyltransferase C-terminal" evidence="2">
    <location>
        <begin position="40"/>
        <end position="294"/>
    </location>
</feature>
<organism>
    <name type="scientific">Prochlorococcus marinus (strain MIT 9515)</name>
    <dbReference type="NCBI Taxonomy" id="167542"/>
    <lineage>
        <taxon>Bacteria</taxon>
        <taxon>Bacillati</taxon>
        <taxon>Cyanobacteriota</taxon>
        <taxon>Cyanophyceae</taxon>
        <taxon>Synechococcales</taxon>
        <taxon>Prochlorococcaceae</taxon>
        <taxon>Prochlorococcus</taxon>
    </lineage>
</organism>
<reference key="1">
    <citation type="journal article" date="2007" name="PLoS Genet.">
        <title>Patterns and implications of gene gain and loss in the evolution of Prochlorococcus.</title>
        <authorList>
            <person name="Kettler G.C."/>
            <person name="Martiny A.C."/>
            <person name="Huang K."/>
            <person name="Zucker J."/>
            <person name="Coleman M.L."/>
            <person name="Rodrigue S."/>
            <person name="Chen F."/>
            <person name="Lapidus A."/>
            <person name="Ferriera S."/>
            <person name="Johnson J."/>
            <person name="Steglich C."/>
            <person name="Church G.M."/>
            <person name="Richardson P."/>
            <person name="Chisholm S.W."/>
        </authorList>
    </citation>
    <scope>NUCLEOTIDE SEQUENCE [LARGE SCALE GENOMIC DNA]</scope>
    <source>
        <strain>MIT 9515</strain>
    </source>
</reference>
<protein>
    <recommendedName>
        <fullName evidence="1">Acetyl-coenzyme A carboxylase carboxyl transferase subunit alpha</fullName>
        <shortName evidence="1">ACCase subunit alpha</shortName>
        <shortName evidence="1">Acetyl-CoA carboxylase carboxyltransferase subunit alpha</shortName>
        <ecNumber evidence="1">2.1.3.15</ecNumber>
    </recommendedName>
</protein>
<gene>
    <name evidence="1" type="primary">accA</name>
    <name type="ordered locus">P9515_05981</name>
</gene>
<accession>A2BVJ6</accession>
<comment type="function">
    <text evidence="1">Component of the acetyl coenzyme A carboxylase (ACC) complex. First, biotin carboxylase catalyzes the carboxylation of biotin on its carrier protein (BCCP) and then the CO(2) group is transferred by the carboxyltransferase to acetyl-CoA to form malonyl-CoA.</text>
</comment>
<comment type="catalytic activity">
    <reaction evidence="1">
        <text>N(6)-carboxybiotinyl-L-lysyl-[protein] + acetyl-CoA = N(6)-biotinyl-L-lysyl-[protein] + malonyl-CoA</text>
        <dbReference type="Rhea" id="RHEA:54728"/>
        <dbReference type="Rhea" id="RHEA-COMP:10505"/>
        <dbReference type="Rhea" id="RHEA-COMP:10506"/>
        <dbReference type="ChEBI" id="CHEBI:57288"/>
        <dbReference type="ChEBI" id="CHEBI:57384"/>
        <dbReference type="ChEBI" id="CHEBI:83144"/>
        <dbReference type="ChEBI" id="CHEBI:83145"/>
        <dbReference type="EC" id="2.1.3.15"/>
    </reaction>
</comment>
<comment type="pathway">
    <text evidence="1">Lipid metabolism; malonyl-CoA biosynthesis; malonyl-CoA from acetyl-CoA: step 1/1.</text>
</comment>
<comment type="subunit">
    <text evidence="1">Acetyl-CoA carboxylase is a heterohexamer composed of biotin carboxyl carrier protein (AccB), biotin carboxylase (AccC) and two subunits each of ACCase subunit alpha (AccA) and ACCase subunit beta (AccD).</text>
</comment>
<comment type="subcellular location">
    <subcellularLocation>
        <location evidence="1">Cytoplasm</location>
    </subcellularLocation>
</comment>
<comment type="similarity">
    <text evidence="1">Belongs to the AccA family.</text>
</comment>
<dbReference type="EC" id="2.1.3.15" evidence="1"/>
<dbReference type="EMBL" id="CP000552">
    <property type="protein sequence ID" value="ABM71807.1"/>
    <property type="molecule type" value="Genomic_DNA"/>
</dbReference>
<dbReference type="RefSeq" id="WP_011819914.1">
    <property type="nucleotide sequence ID" value="NC_008817.1"/>
</dbReference>
<dbReference type="SMR" id="A2BVJ6"/>
<dbReference type="STRING" id="167542.P9515_05981"/>
<dbReference type="GeneID" id="60201137"/>
<dbReference type="KEGG" id="pmc:P9515_05981"/>
<dbReference type="eggNOG" id="COG0825">
    <property type="taxonomic scope" value="Bacteria"/>
</dbReference>
<dbReference type="HOGENOM" id="CLU_015486_0_2_3"/>
<dbReference type="OrthoDB" id="9808023at2"/>
<dbReference type="UniPathway" id="UPA00655">
    <property type="reaction ID" value="UER00711"/>
</dbReference>
<dbReference type="Proteomes" id="UP000001589">
    <property type="component" value="Chromosome"/>
</dbReference>
<dbReference type="GO" id="GO:0009317">
    <property type="term" value="C:acetyl-CoA carboxylase complex"/>
    <property type="evidence" value="ECO:0007669"/>
    <property type="project" value="InterPro"/>
</dbReference>
<dbReference type="GO" id="GO:0003989">
    <property type="term" value="F:acetyl-CoA carboxylase activity"/>
    <property type="evidence" value="ECO:0007669"/>
    <property type="project" value="InterPro"/>
</dbReference>
<dbReference type="GO" id="GO:0005524">
    <property type="term" value="F:ATP binding"/>
    <property type="evidence" value="ECO:0007669"/>
    <property type="project" value="UniProtKB-KW"/>
</dbReference>
<dbReference type="GO" id="GO:0016743">
    <property type="term" value="F:carboxyl- or carbamoyltransferase activity"/>
    <property type="evidence" value="ECO:0007669"/>
    <property type="project" value="UniProtKB-UniRule"/>
</dbReference>
<dbReference type="GO" id="GO:0006633">
    <property type="term" value="P:fatty acid biosynthetic process"/>
    <property type="evidence" value="ECO:0007669"/>
    <property type="project" value="UniProtKB-KW"/>
</dbReference>
<dbReference type="GO" id="GO:2001295">
    <property type="term" value="P:malonyl-CoA biosynthetic process"/>
    <property type="evidence" value="ECO:0007669"/>
    <property type="project" value="UniProtKB-UniRule"/>
</dbReference>
<dbReference type="Gene3D" id="3.90.226.10">
    <property type="entry name" value="2-enoyl-CoA Hydratase, Chain A, domain 1"/>
    <property type="match status" value="1"/>
</dbReference>
<dbReference type="HAMAP" id="MF_00823">
    <property type="entry name" value="AcetylCoA_CT_alpha"/>
    <property type="match status" value="1"/>
</dbReference>
<dbReference type="InterPro" id="IPR001095">
    <property type="entry name" value="Acetyl_CoA_COase_a_su"/>
</dbReference>
<dbReference type="InterPro" id="IPR029045">
    <property type="entry name" value="ClpP/crotonase-like_dom_sf"/>
</dbReference>
<dbReference type="InterPro" id="IPR011763">
    <property type="entry name" value="COA_CT_C"/>
</dbReference>
<dbReference type="NCBIfam" id="TIGR00513">
    <property type="entry name" value="accA"/>
    <property type="match status" value="1"/>
</dbReference>
<dbReference type="NCBIfam" id="NF041504">
    <property type="entry name" value="AccA_sub"/>
    <property type="match status" value="1"/>
</dbReference>
<dbReference type="NCBIfam" id="NF004344">
    <property type="entry name" value="PRK05724.1"/>
    <property type="match status" value="1"/>
</dbReference>
<dbReference type="PANTHER" id="PTHR42853">
    <property type="entry name" value="ACETYL-COENZYME A CARBOXYLASE CARBOXYL TRANSFERASE SUBUNIT ALPHA"/>
    <property type="match status" value="1"/>
</dbReference>
<dbReference type="PANTHER" id="PTHR42853:SF3">
    <property type="entry name" value="ACETYL-COENZYME A CARBOXYLASE CARBOXYL TRANSFERASE SUBUNIT ALPHA, CHLOROPLASTIC"/>
    <property type="match status" value="1"/>
</dbReference>
<dbReference type="Pfam" id="PF03255">
    <property type="entry name" value="ACCA"/>
    <property type="match status" value="1"/>
</dbReference>
<dbReference type="PRINTS" id="PR01069">
    <property type="entry name" value="ACCCTRFRASEA"/>
</dbReference>
<dbReference type="SUPFAM" id="SSF52096">
    <property type="entry name" value="ClpP/crotonase"/>
    <property type="match status" value="1"/>
</dbReference>
<dbReference type="PROSITE" id="PS50989">
    <property type="entry name" value="COA_CT_CTER"/>
    <property type="match status" value="1"/>
</dbReference>